<proteinExistence type="inferred from homology"/>
<reference key="1">
    <citation type="journal article" date="2007" name="Mol. Phylogenet. Evol.">
        <title>Phylogenetic and evolutionary implications of complete chloroplast genome sequences of four early-diverging angiosperms: Buxus (Buxaceae), Chloranthus (Chloranthaceae), Dioscorea (Dioscoreaceae), and Illicium (Schisandraceae).</title>
        <authorList>
            <person name="Hansen D.R."/>
            <person name="Dastidar S.G."/>
            <person name="Cai Z."/>
            <person name="Penaflor C."/>
            <person name="Kuehl J.V."/>
            <person name="Boore J.L."/>
            <person name="Jansen R.K."/>
        </authorList>
    </citation>
    <scope>NUCLEOTIDE SEQUENCE [LARGE SCALE GENOMIC DNA]</scope>
</reference>
<organism>
    <name type="scientific">Buxus microphylla</name>
    <name type="common">Littleleaf boxwood</name>
    <name type="synonym">Japanese boxwood</name>
    <dbReference type="NCBI Taxonomy" id="153571"/>
    <lineage>
        <taxon>Eukaryota</taxon>
        <taxon>Viridiplantae</taxon>
        <taxon>Streptophyta</taxon>
        <taxon>Embryophyta</taxon>
        <taxon>Tracheophyta</taxon>
        <taxon>Spermatophyta</taxon>
        <taxon>Magnoliopsida</taxon>
        <taxon>Buxales</taxon>
        <taxon>Buxaceae</taxon>
        <taxon>Buxus</taxon>
    </lineage>
</organism>
<accession>A6MM43</accession>
<name>ATPB_BUXMI</name>
<evidence type="ECO:0000255" key="1">
    <source>
        <dbReference type="HAMAP-Rule" id="MF_01347"/>
    </source>
</evidence>
<keyword id="KW-0066">ATP synthesis</keyword>
<keyword id="KW-0067">ATP-binding</keyword>
<keyword id="KW-0139">CF(1)</keyword>
<keyword id="KW-0150">Chloroplast</keyword>
<keyword id="KW-0375">Hydrogen ion transport</keyword>
<keyword id="KW-0406">Ion transport</keyword>
<keyword id="KW-0472">Membrane</keyword>
<keyword id="KW-0547">Nucleotide-binding</keyword>
<keyword id="KW-0934">Plastid</keyword>
<keyword id="KW-0793">Thylakoid</keyword>
<keyword id="KW-1278">Translocase</keyword>
<keyword id="KW-0813">Transport</keyword>
<geneLocation type="chloroplast"/>
<comment type="function">
    <text evidence="1">Produces ATP from ADP in the presence of a proton gradient across the membrane. The catalytic sites are hosted primarily by the beta subunits.</text>
</comment>
<comment type="catalytic activity">
    <reaction evidence="1">
        <text>ATP + H2O + 4 H(+)(in) = ADP + phosphate + 5 H(+)(out)</text>
        <dbReference type="Rhea" id="RHEA:57720"/>
        <dbReference type="ChEBI" id="CHEBI:15377"/>
        <dbReference type="ChEBI" id="CHEBI:15378"/>
        <dbReference type="ChEBI" id="CHEBI:30616"/>
        <dbReference type="ChEBI" id="CHEBI:43474"/>
        <dbReference type="ChEBI" id="CHEBI:456216"/>
        <dbReference type="EC" id="7.1.2.2"/>
    </reaction>
</comment>
<comment type="subunit">
    <text evidence="1">F-type ATPases have 2 components, CF(1) - the catalytic core - and CF(0) - the membrane proton channel. CF(1) has five subunits: alpha(3), beta(3), gamma(1), delta(1), epsilon(1). CF(0) has four main subunits: a(1), b(1), b'(1) and c(9-12).</text>
</comment>
<comment type="subcellular location">
    <subcellularLocation>
        <location evidence="1">Plastid</location>
        <location evidence="1">Chloroplast thylakoid membrane</location>
        <topology evidence="1">Peripheral membrane protein</topology>
    </subcellularLocation>
</comment>
<comment type="similarity">
    <text evidence="1">Belongs to the ATPase alpha/beta chains family.</text>
</comment>
<gene>
    <name evidence="1" type="primary">atpB</name>
</gene>
<dbReference type="EC" id="7.1.2.2" evidence="1"/>
<dbReference type="EMBL" id="EF380351">
    <property type="protein sequence ID" value="ABQ45256.1"/>
    <property type="molecule type" value="Genomic_DNA"/>
</dbReference>
<dbReference type="RefSeq" id="YP_001294191.1">
    <property type="nucleotide sequence ID" value="NC_009599.1"/>
</dbReference>
<dbReference type="SMR" id="A6MM43"/>
<dbReference type="GeneID" id="5236880"/>
<dbReference type="GO" id="GO:0009535">
    <property type="term" value="C:chloroplast thylakoid membrane"/>
    <property type="evidence" value="ECO:0007669"/>
    <property type="project" value="UniProtKB-SubCell"/>
</dbReference>
<dbReference type="GO" id="GO:0005739">
    <property type="term" value="C:mitochondrion"/>
    <property type="evidence" value="ECO:0007669"/>
    <property type="project" value="GOC"/>
</dbReference>
<dbReference type="GO" id="GO:0045259">
    <property type="term" value="C:proton-transporting ATP synthase complex"/>
    <property type="evidence" value="ECO:0007669"/>
    <property type="project" value="UniProtKB-KW"/>
</dbReference>
<dbReference type="GO" id="GO:0005524">
    <property type="term" value="F:ATP binding"/>
    <property type="evidence" value="ECO:0007669"/>
    <property type="project" value="UniProtKB-UniRule"/>
</dbReference>
<dbReference type="GO" id="GO:0016887">
    <property type="term" value="F:ATP hydrolysis activity"/>
    <property type="evidence" value="ECO:0007669"/>
    <property type="project" value="InterPro"/>
</dbReference>
<dbReference type="GO" id="GO:0046933">
    <property type="term" value="F:proton-transporting ATP synthase activity, rotational mechanism"/>
    <property type="evidence" value="ECO:0007669"/>
    <property type="project" value="UniProtKB-UniRule"/>
</dbReference>
<dbReference type="GO" id="GO:0042776">
    <property type="term" value="P:proton motive force-driven mitochondrial ATP synthesis"/>
    <property type="evidence" value="ECO:0007669"/>
    <property type="project" value="TreeGrafter"/>
</dbReference>
<dbReference type="CDD" id="cd18110">
    <property type="entry name" value="ATP-synt_F1_beta_C"/>
    <property type="match status" value="1"/>
</dbReference>
<dbReference type="CDD" id="cd18115">
    <property type="entry name" value="ATP-synt_F1_beta_N"/>
    <property type="match status" value="1"/>
</dbReference>
<dbReference type="CDD" id="cd01133">
    <property type="entry name" value="F1-ATPase_beta_CD"/>
    <property type="match status" value="1"/>
</dbReference>
<dbReference type="FunFam" id="1.10.1140.10:FF:000001">
    <property type="entry name" value="ATP synthase subunit beta"/>
    <property type="match status" value="1"/>
</dbReference>
<dbReference type="FunFam" id="3.40.50.300:FF:000004">
    <property type="entry name" value="ATP synthase subunit beta"/>
    <property type="match status" value="1"/>
</dbReference>
<dbReference type="FunFam" id="2.40.10.170:FF:000002">
    <property type="entry name" value="ATP synthase subunit beta, chloroplastic"/>
    <property type="match status" value="1"/>
</dbReference>
<dbReference type="Gene3D" id="2.40.10.170">
    <property type="match status" value="1"/>
</dbReference>
<dbReference type="Gene3D" id="1.10.1140.10">
    <property type="entry name" value="Bovine Mitochondrial F1-atpase, Atp Synthase Beta Chain, Chain D, domain 3"/>
    <property type="match status" value="1"/>
</dbReference>
<dbReference type="Gene3D" id="3.40.50.300">
    <property type="entry name" value="P-loop containing nucleotide triphosphate hydrolases"/>
    <property type="match status" value="1"/>
</dbReference>
<dbReference type="HAMAP" id="MF_01347">
    <property type="entry name" value="ATP_synth_beta_bact"/>
    <property type="match status" value="1"/>
</dbReference>
<dbReference type="InterPro" id="IPR003593">
    <property type="entry name" value="AAA+_ATPase"/>
</dbReference>
<dbReference type="InterPro" id="IPR055190">
    <property type="entry name" value="ATP-synt_VA_C"/>
</dbReference>
<dbReference type="InterPro" id="IPR005722">
    <property type="entry name" value="ATP_synth_F1_bsu"/>
</dbReference>
<dbReference type="InterPro" id="IPR020003">
    <property type="entry name" value="ATPase_a/bsu_AS"/>
</dbReference>
<dbReference type="InterPro" id="IPR050053">
    <property type="entry name" value="ATPase_alpha/beta_chains"/>
</dbReference>
<dbReference type="InterPro" id="IPR004100">
    <property type="entry name" value="ATPase_F1/V1/A1_a/bsu_N"/>
</dbReference>
<dbReference type="InterPro" id="IPR036121">
    <property type="entry name" value="ATPase_F1/V1/A1_a/bsu_N_sf"/>
</dbReference>
<dbReference type="InterPro" id="IPR000194">
    <property type="entry name" value="ATPase_F1/V1/A1_a/bsu_nucl-bd"/>
</dbReference>
<dbReference type="InterPro" id="IPR024034">
    <property type="entry name" value="ATPase_F1/V1_b/a_C"/>
</dbReference>
<dbReference type="InterPro" id="IPR027417">
    <property type="entry name" value="P-loop_NTPase"/>
</dbReference>
<dbReference type="NCBIfam" id="TIGR01039">
    <property type="entry name" value="atpD"/>
    <property type="match status" value="1"/>
</dbReference>
<dbReference type="PANTHER" id="PTHR15184">
    <property type="entry name" value="ATP SYNTHASE"/>
    <property type="match status" value="1"/>
</dbReference>
<dbReference type="PANTHER" id="PTHR15184:SF71">
    <property type="entry name" value="ATP SYNTHASE SUBUNIT BETA, MITOCHONDRIAL"/>
    <property type="match status" value="1"/>
</dbReference>
<dbReference type="Pfam" id="PF00006">
    <property type="entry name" value="ATP-synt_ab"/>
    <property type="match status" value="1"/>
</dbReference>
<dbReference type="Pfam" id="PF02874">
    <property type="entry name" value="ATP-synt_ab_N"/>
    <property type="match status" value="1"/>
</dbReference>
<dbReference type="Pfam" id="PF22919">
    <property type="entry name" value="ATP-synt_VA_C"/>
    <property type="match status" value="1"/>
</dbReference>
<dbReference type="SMART" id="SM00382">
    <property type="entry name" value="AAA"/>
    <property type="match status" value="1"/>
</dbReference>
<dbReference type="SUPFAM" id="SSF47917">
    <property type="entry name" value="C-terminal domain of alpha and beta subunits of F1 ATP synthase"/>
    <property type="match status" value="1"/>
</dbReference>
<dbReference type="SUPFAM" id="SSF50615">
    <property type="entry name" value="N-terminal domain of alpha and beta subunits of F1 ATP synthase"/>
    <property type="match status" value="1"/>
</dbReference>
<dbReference type="SUPFAM" id="SSF52540">
    <property type="entry name" value="P-loop containing nucleoside triphosphate hydrolases"/>
    <property type="match status" value="1"/>
</dbReference>
<dbReference type="PROSITE" id="PS00152">
    <property type="entry name" value="ATPASE_ALPHA_BETA"/>
    <property type="match status" value="1"/>
</dbReference>
<feature type="chain" id="PRO_0000339608" description="ATP synthase subunit beta, chloroplastic">
    <location>
        <begin position="1"/>
        <end position="498"/>
    </location>
</feature>
<feature type="binding site" evidence="1">
    <location>
        <begin position="172"/>
        <end position="179"/>
    </location>
    <ligand>
        <name>ATP</name>
        <dbReference type="ChEBI" id="CHEBI:30616"/>
    </ligand>
</feature>
<sequence length="498" mass="53823">MRINPTTSGPEVSTLEEKNLGRIAQIIGPVLDVAFPPGKMPNIYNALVVKGRDTVGQQINVTCEVQQLLGNNRVRAVAMSATDGLTRGMEVIDTRAPLSVPVGGATLGRIFNVLGEPVDNLGPVDTRTTSPIHRSAPAFIQLDTKLSIFETGIKVVDLLAPYRRGGKIGLFGGAGVGKTVLIMELINNIAKAHGGVSVFGGVGERTREGNDLYMEMKESGVINEQNIAESKVALVYGQMNEPPGARMRVGLTALTMAEYFRDVNEQDVLLFIDNIFRFVQAGSEVSALLGRMPSAVGYQPTLSTEMGSLQERITSTKEGSITSIQAVYVPADDLTDPAPATTFAHLDATTVLSRGLAAKGIYPAVDPLDSTSTMLQPRIVGEEHYETAQRVKQTLQRYKELQDIIAILGLDELSEEDRLTVARARKIERFLSQPFFVAEVFTGSPGKYVGLAETIRGFQLILSGELDGLPEQAFYLVGNIDEATAKAMNLEVESKLKK</sequence>
<protein>
    <recommendedName>
        <fullName evidence="1">ATP synthase subunit beta, chloroplastic</fullName>
        <ecNumber evidence="1">7.1.2.2</ecNumber>
    </recommendedName>
    <alternativeName>
        <fullName evidence="1">ATP synthase F1 sector subunit beta</fullName>
    </alternativeName>
    <alternativeName>
        <fullName evidence="1">F-ATPase subunit beta</fullName>
    </alternativeName>
</protein>